<sequence>MQTIIRVEKLAKTFNQHQALHAVDLNIHHSEMVALLGPSGSGKSTLLRHLSGLITGDKSAGSHIELLGRTVQREGRLARDIRKSRANTGYIFQQFNLVNRLSVLENVLIGALGSTPFWRTCFSWFTGEQKQRALQALTRVGMVHFAHQRVSTLSGGQQQRVAIARALMQQAKVILADEPIASLDPESARIVMDTLRDINQNDGITVVVTLHQVDYALRYCERIVALRQGHVFYDGSSQLFDNERFDHLYRSINRIEENAKAA</sequence>
<comment type="function">
    <text evidence="1">Part of the ABC transporter complex PhnCDE involved in phosphonates import. Responsible for energy coupling to the transport system.</text>
</comment>
<comment type="catalytic activity">
    <reaction evidence="1">
        <text>phosphonate(out) + ATP + H2O = phosphonate(in) + ADP + phosphate + H(+)</text>
        <dbReference type="Rhea" id="RHEA:18065"/>
        <dbReference type="ChEBI" id="CHEBI:15377"/>
        <dbReference type="ChEBI" id="CHEBI:15378"/>
        <dbReference type="ChEBI" id="CHEBI:16215"/>
        <dbReference type="ChEBI" id="CHEBI:30616"/>
        <dbReference type="ChEBI" id="CHEBI:43474"/>
        <dbReference type="ChEBI" id="CHEBI:456216"/>
        <dbReference type="EC" id="7.3.2.2"/>
    </reaction>
</comment>
<comment type="subunit">
    <text evidence="1">The complex is composed of two ATP-binding proteins (PhnC), two transmembrane proteins (PhnE) and a solute-binding protein (PhnD).</text>
</comment>
<comment type="subcellular location">
    <subcellularLocation>
        <location evidence="1">Cell inner membrane</location>
        <topology evidence="1">Peripheral membrane protein</topology>
    </subcellularLocation>
</comment>
<comment type="similarity">
    <text evidence="1">Belongs to the ABC transporter superfamily. Phosphonates importer (TC 3.A.1.9.1) family.</text>
</comment>
<feature type="chain" id="PRO_0000274752" description="Phosphonates import ATP-binding protein PhnC">
    <location>
        <begin position="1"/>
        <end position="262"/>
    </location>
</feature>
<feature type="domain" description="ABC transporter" evidence="1">
    <location>
        <begin position="5"/>
        <end position="253"/>
    </location>
</feature>
<feature type="binding site" evidence="1">
    <location>
        <begin position="37"/>
        <end position="44"/>
    </location>
    <ligand>
        <name>ATP</name>
        <dbReference type="ChEBI" id="CHEBI:30616"/>
    </ligand>
</feature>
<name>PHNC_SHIF8</name>
<gene>
    <name evidence="1" type="primary">phnC</name>
    <name type="ordered locus">SFV_4124</name>
</gene>
<organism>
    <name type="scientific">Shigella flexneri serotype 5b (strain 8401)</name>
    <dbReference type="NCBI Taxonomy" id="373384"/>
    <lineage>
        <taxon>Bacteria</taxon>
        <taxon>Pseudomonadati</taxon>
        <taxon>Pseudomonadota</taxon>
        <taxon>Gammaproteobacteria</taxon>
        <taxon>Enterobacterales</taxon>
        <taxon>Enterobacteriaceae</taxon>
        <taxon>Shigella</taxon>
    </lineage>
</organism>
<evidence type="ECO:0000255" key="1">
    <source>
        <dbReference type="HAMAP-Rule" id="MF_01713"/>
    </source>
</evidence>
<reference key="1">
    <citation type="journal article" date="2006" name="BMC Genomics">
        <title>Complete genome sequence of Shigella flexneri 5b and comparison with Shigella flexneri 2a.</title>
        <authorList>
            <person name="Nie H."/>
            <person name="Yang F."/>
            <person name="Zhang X."/>
            <person name="Yang J."/>
            <person name="Chen L."/>
            <person name="Wang J."/>
            <person name="Xiong Z."/>
            <person name="Peng J."/>
            <person name="Sun L."/>
            <person name="Dong J."/>
            <person name="Xue Y."/>
            <person name="Xu X."/>
            <person name="Chen S."/>
            <person name="Yao Z."/>
            <person name="Shen Y."/>
            <person name="Jin Q."/>
        </authorList>
    </citation>
    <scope>NUCLEOTIDE SEQUENCE [LARGE SCALE GENOMIC DNA]</scope>
    <source>
        <strain>8401</strain>
    </source>
</reference>
<accession>Q0SXV5</accession>
<keyword id="KW-0067">ATP-binding</keyword>
<keyword id="KW-0997">Cell inner membrane</keyword>
<keyword id="KW-1003">Cell membrane</keyword>
<keyword id="KW-0472">Membrane</keyword>
<keyword id="KW-0547">Nucleotide-binding</keyword>
<keyword id="KW-0918">Phosphonate transport</keyword>
<keyword id="KW-1278">Translocase</keyword>
<keyword id="KW-0813">Transport</keyword>
<dbReference type="EC" id="7.3.2.2" evidence="1"/>
<dbReference type="EMBL" id="CP000266">
    <property type="protein sequence ID" value="ABF06110.1"/>
    <property type="molecule type" value="Genomic_DNA"/>
</dbReference>
<dbReference type="RefSeq" id="WP_001193423.1">
    <property type="nucleotide sequence ID" value="NC_008258.1"/>
</dbReference>
<dbReference type="SMR" id="Q0SXV5"/>
<dbReference type="KEGG" id="sfv:SFV_4124"/>
<dbReference type="HOGENOM" id="CLU_000604_1_22_6"/>
<dbReference type="Proteomes" id="UP000000659">
    <property type="component" value="Chromosome"/>
</dbReference>
<dbReference type="GO" id="GO:0005886">
    <property type="term" value="C:plasma membrane"/>
    <property type="evidence" value="ECO:0007669"/>
    <property type="project" value="UniProtKB-SubCell"/>
</dbReference>
<dbReference type="GO" id="GO:0015416">
    <property type="term" value="F:ABC-type phosphonate transporter activity"/>
    <property type="evidence" value="ECO:0007669"/>
    <property type="project" value="UniProtKB-EC"/>
</dbReference>
<dbReference type="GO" id="GO:0005524">
    <property type="term" value="F:ATP binding"/>
    <property type="evidence" value="ECO:0007669"/>
    <property type="project" value="UniProtKB-KW"/>
</dbReference>
<dbReference type="GO" id="GO:0016887">
    <property type="term" value="F:ATP hydrolysis activity"/>
    <property type="evidence" value="ECO:0007669"/>
    <property type="project" value="InterPro"/>
</dbReference>
<dbReference type="CDD" id="cd03256">
    <property type="entry name" value="ABC_PhnC_transporter"/>
    <property type="match status" value="1"/>
</dbReference>
<dbReference type="Gene3D" id="3.40.50.300">
    <property type="entry name" value="P-loop containing nucleotide triphosphate hydrolases"/>
    <property type="match status" value="1"/>
</dbReference>
<dbReference type="InterPro" id="IPR003593">
    <property type="entry name" value="AAA+_ATPase"/>
</dbReference>
<dbReference type="InterPro" id="IPR003439">
    <property type="entry name" value="ABC_transporter-like_ATP-bd"/>
</dbReference>
<dbReference type="InterPro" id="IPR017871">
    <property type="entry name" value="ABC_transporter-like_CS"/>
</dbReference>
<dbReference type="InterPro" id="IPR012693">
    <property type="entry name" value="ABC_transpr_PhnC"/>
</dbReference>
<dbReference type="InterPro" id="IPR050086">
    <property type="entry name" value="MetN_ABC_transporter-like"/>
</dbReference>
<dbReference type="InterPro" id="IPR027417">
    <property type="entry name" value="P-loop_NTPase"/>
</dbReference>
<dbReference type="NCBIfam" id="TIGR02315">
    <property type="entry name" value="ABC_phnC"/>
    <property type="match status" value="1"/>
</dbReference>
<dbReference type="NCBIfam" id="NF007438">
    <property type="entry name" value="PRK09984.1"/>
    <property type="match status" value="1"/>
</dbReference>
<dbReference type="PANTHER" id="PTHR43166">
    <property type="entry name" value="AMINO ACID IMPORT ATP-BINDING PROTEIN"/>
    <property type="match status" value="1"/>
</dbReference>
<dbReference type="PANTHER" id="PTHR43166:SF6">
    <property type="entry name" value="PHOSPHONATES IMPORT ATP-BINDING PROTEIN PHNC"/>
    <property type="match status" value="1"/>
</dbReference>
<dbReference type="Pfam" id="PF00005">
    <property type="entry name" value="ABC_tran"/>
    <property type="match status" value="1"/>
</dbReference>
<dbReference type="SMART" id="SM00382">
    <property type="entry name" value="AAA"/>
    <property type="match status" value="1"/>
</dbReference>
<dbReference type="SUPFAM" id="SSF52540">
    <property type="entry name" value="P-loop containing nucleoside triphosphate hydrolases"/>
    <property type="match status" value="1"/>
</dbReference>
<dbReference type="PROSITE" id="PS00211">
    <property type="entry name" value="ABC_TRANSPORTER_1"/>
    <property type="match status" value="1"/>
</dbReference>
<dbReference type="PROSITE" id="PS50893">
    <property type="entry name" value="ABC_TRANSPORTER_2"/>
    <property type="match status" value="1"/>
</dbReference>
<dbReference type="PROSITE" id="PS51249">
    <property type="entry name" value="PHNC"/>
    <property type="match status" value="1"/>
</dbReference>
<proteinExistence type="inferred from homology"/>
<protein>
    <recommendedName>
        <fullName evidence="1">Phosphonates import ATP-binding protein PhnC</fullName>
        <ecNumber evidence="1">7.3.2.2</ecNumber>
    </recommendedName>
</protein>